<evidence type="ECO:0000255" key="1">
    <source>
        <dbReference type="HAMAP-Rule" id="MF_00362"/>
    </source>
</evidence>
<evidence type="ECO:0000305" key="2"/>
<feature type="chain" id="PRO_1000120927" description="Large ribosomal subunit protein uL10">
    <location>
        <begin position="1"/>
        <end position="161"/>
    </location>
</feature>
<gene>
    <name evidence="1" type="primary">rplJ</name>
    <name type="ordered locus">BCc_021</name>
</gene>
<proteinExistence type="inferred from homology"/>
<reference key="1">
    <citation type="journal article" date="2006" name="Science">
        <title>A small microbial genome: the end of a long symbiotic relationship?</title>
        <authorList>
            <person name="Perez-Brocal V."/>
            <person name="Gil R."/>
            <person name="Ramos S."/>
            <person name="Lamelas A."/>
            <person name="Postigo M."/>
            <person name="Michelena J.M."/>
            <person name="Silva F.J."/>
            <person name="Moya A."/>
            <person name="Latorre A."/>
        </authorList>
    </citation>
    <scope>NUCLEOTIDE SEQUENCE [LARGE SCALE GENOMIC DNA]</scope>
    <source>
        <strain>Cc</strain>
    </source>
</reference>
<dbReference type="EMBL" id="CP000263">
    <property type="protein sequence ID" value="ABJ90506.1"/>
    <property type="molecule type" value="Genomic_DNA"/>
</dbReference>
<dbReference type="RefSeq" id="WP_011672425.1">
    <property type="nucleotide sequence ID" value="NC_008513.1"/>
</dbReference>
<dbReference type="SMR" id="Q058E3"/>
<dbReference type="STRING" id="372461.BCc_021"/>
<dbReference type="KEGG" id="bcc:BCc_021"/>
<dbReference type="eggNOG" id="COG0244">
    <property type="taxonomic scope" value="Bacteria"/>
</dbReference>
<dbReference type="HOGENOM" id="CLU_092227_0_2_6"/>
<dbReference type="OrthoDB" id="9808307at2"/>
<dbReference type="Proteomes" id="UP000000669">
    <property type="component" value="Chromosome"/>
</dbReference>
<dbReference type="GO" id="GO:1990904">
    <property type="term" value="C:ribonucleoprotein complex"/>
    <property type="evidence" value="ECO:0007669"/>
    <property type="project" value="UniProtKB-KW"/>
</dbReference>
<dbReference type="GO" id="GO:0005840">
    <property type="term" value="C:ribosome"/>
    <property type="evidence" value="ECO:0007669"/>
    <property type="project" value="UniProtKB-KW"/>
</dbReference>
<dbReference type="GO" id="GO:0070180">
    <property type="term" value="F:large ribosomal subunit rRNA binding"/>
    <property type="evidence" value="ECO:0007669"/>
    <property type="project" value="UniProtKB-UniRule"/>
</dbReference>
<dbReference type="GO" id="GO:0006412">
    <property type="term" value="P:translation"/>
    <property type="evidence" value="ECO:0007669"/>
    <property type="project" value="UniProtKB-UniRule"/>
</dbReference>
<dbReference type="CDD" id="cd05797">
    <property type="entry name" value="Ribosomal_L10"/>
    <property type="match status" value="1"/>
</dbReference>
<dbReference type="Gene3D" id="3.30.70.1730">
    <property type="match status" value="1"/>
</dbReference>
<dbReference type="HAMAP" id="MF_00362">
    <property type="entry name" value="Ribosomal_uL10"/>
    <property type="match status" value="1"/>
</dbReference>
<dbReference type="InterPro" id="IPR001790">
    <property type="entry name" value="Ribosomal_uL10"/>
</dbReference>
<dbReference type="InterPro" id="IPR043141">
    <property type="entry name" value="Ribosomal_uL10-like_sf"/>
</dbReference>
<dbReference type="InterPro" id="IPR022973">
    <property type="entry name" value="Ribosomal_uL10_bac"/>
</dbReference>
<dbReference type="InterPro" id="IPR047865">
    <property type="entry name" value="Ribosomal_uL10_bac_type"/>
</dbReference>
<dbReference type="NCBIfam" id="NF000955">
    <property type="entry name" value="PRK00099.1-1"/>
    <property type="match status" value="1"/>
</dbReference>
<dbReference type="PANTHER" id="PTHR11560">
    <property type="entry name" value="39S RIBOSOMAL PROTEIN L10, MITOCHONDRIAL"/>
    <property type="match status" value="1"/>
</dbReference>
<dbReference type="Pfam" id="PF00466">
    <property type="entry name" value="Ribosomal_L10"/>
    <property type="match status" value="1"/>
</dbReference>
<dbReference type="SUPFAM" id="SSF160369">
    <property type="entry name" value="Ribosomal protein L10-like"/>
    <property type="match status" value="1"/>
</dbReference>
<name>RL10_BUCCC</name>
<comment type="function">
    <text evidence="1">Forms part of the ribosomal stalk, playing a central role in the interaction of the ribosome with GTP-bound translation factors.</text>
</comment>
<comment type="subunit">
    <text evidence="1">Part of the ribosomal stalk of the 50S ribosomal subunit. The N-terminus interacts with L11 and the large rRNA to form the base of the stalk. The C-terminus forms an elongated spine to which L12 dimers bind in a sequential fashion forming a multimeric L10(L12)X complex.</text>
</comment>
<comment type="similarity">
    <text evidence="1">Belongs to the universal ribosomal protein uL10 family.</text>
</comment>
<accession>Q058E3</accession>
<organism>
    <name type="scientific">Buchnera aphidicola subsp. Cinara cedri (strain Cc)</name>
    <dbReference type="NCBI Taxonomy" id="372461"/>
    <lineage>
        <taxon>Bacteria</taxon>
        <taxon>Pseudomonadati</taxon>
        <taxon>Pseudomonadota</taxon>
        <taxon>Gammaproteobacteria</taxon>
        <taxon>Enterobacterales</taxon>
        <taxon>Erwiniaceae</taxon>
        <taxon>Buchnera</taxon>
    </lineage>
</organism>
<sequence length="161" mass="18465">MALNRNKKKKIIKKINNVANKSLSIITANPSKITVNIINKLRKKAKINNIKIYVIRNTLLKKSLKKTIFSKLINIIKGPILVGFSMKHPGSASRLFIKFNKKNINFKILNAIYEKKILNIHEIKDLANLPTHIESITKFVILLKEISLGKFIRVLQNITKK</sequence>
<protein>
    <recommendedName>
        <fullName evidence="1">Large ribosomal subunit protein uL10</fullName>
    </recommendedName>
    <alternativeName>
        <fullName evidence="2">50S ribosomal protein L10</fullName>
    </alternativeName>
</protein>
<keyword id="KW-1185">Reference proteome</keyword>
<keyword id="KW-0687">Ribonucleoprotein</keyword>
<keyword id="KW-0689">Ribosomal protein</keyword>
<keyword id="KW-0694">RNA-binding</keyword>
<keyword id="KW-0699">rRNA-binding</keyword>